<accession>A7H4B1</accession>
<gene>
    <name evidence="1" type="primary">rplS</name>
    <name type="ordered locus">JJD26997_1292</name>
</gene>
<organism>
    <name type="scientific">Campylobacter jejuni subsp. doylei (strain ATCC BAA-1458 / RM4099 / 269.97)</name>
    <dbReference type="NCBI Taxonomy" id="360109"/>
    <lineage>
        <taxon>Bacteria</taxon>
        <taxon>Pseudomonadati</taxon>
        <taxon>Campylobacterota</taxon>
        <taxon>Epsilonproteobacteria</taxon>
        <taxon>Campylobacterales</taxon>
        <taxon>Campylobacteraceae</taxon>
        <taxon>Campylobacter</taxon>
    </lineage>
</organism>
<sequence>MKNKYIEQFEAKQIEGKNVPDFRAGDTLKLAIRIKEGDKTRIQNFEGICIARRGNGVSETFIVRKMGANNVGVERIFPIYSESLESIAVLRRGRVRRARLFYLRDRRGKAARIKELKK</sequence>
<name>RL19_CAMJD</name>
<proteinExistence type="inferred from homology"/>
<protein>
    <recommendedName>
        <fullName evidence="1">Large ribosomal subunit protein bL19</fullName>
    </recommendedName>
    <alternativeName>
        <fullName evidence="2">50S ribosomal protein L19</fullName>
    </alternativeName>
</protein>
<evidence type="ECO:0000255" key="1">
    <source>
        <dbReference type="HAMAP-Rule" id="MF_00402"/>
    </source>
</evidence>
<evidence type="ECO:0000305" key="2"/>
<comment type="function">
    <text evidence="1">This protein is located at the 30S-50S ribosomal subunit interface and may play a role in the structure and function of the aminoacyl-tRNA binding site.</text>
</comment>
<comment type="similarity">
    <text evidence="1">Belongs to the bacterial ribosomal protein bL19 family.</text>
</comment>
<keyword id="KW-0687">Ribonucleoprotein</keyword>
<keyword id="KW-0689">Ribosomal protein</keyword>
<reference key="1">
    <citation type="submission" date="2007-07" db="EMBL/GenBank/DDBJ databases">
        <title>Complete genome sequence of Campylobacter jejuni subsp doylei 269.97 isolated from human blood.</title>
        <authorList>
            <person name="Fouts D.E."/>
            <person name="Mongodin E.F."/>
            <person name="Puiu D."/>
            <person name="Sebastian Y."/>
            <person name="Miller W.G."/>
            <person name="Mandrell R.E."/>
            <person name="Lastovica A.J."/>
            <person name="Nelson K.E."/>
        </authorList>
    </citation>
    <scope>NUCLEOTIDE SEQUENCE [LARGE SCALE GENOMIC DNA]</scope>
    <source>
        <strain>ATCC BAA-1458 / RM4099 / 269.97</strain>
    </source>
</reference>
<dbReference type="EMBL" id="CP000768">
    <property type="protein sequence ID" value="ABS43267.1"/>
    <property type="molecule type" value="Genomic_DNA"/>
</dbReference>
<dbReference type="SMR" id="A7H4B1"/>
<dbReference type="KEGG" id="cjd:JJD26997_1292"/>
<dbReference type="HOGENOM" id="CLU_103507_2_2_7"/>
<dbReference type="Proteomes" id="UP000002302">
    <property type="component" value="Chromosome"/>
</dbReference>
<dbReference type="GO" id="GO:0022625">
    <property type="term" value="C:cytosolic large ribosomal subunit"/>
    <property type="evidence" value="ECO:0007669"/>
    <property type="project" value="TreeGrafter"/>
</dbReference>
<dbReference type="GO" id="GO:0003735">
    <property type="term" value="F:structural constituent of ribosome"/>
    <property type="evidence" value="ECO:0007669"/>
    <property type="project" value="InterPro"/>
</dbReference>
<dbReference type="GO" id="GO:0006412">
    <property type="term" value="P:translation"/>
    <property type="evidence" value="ECO:0007669"/>
    <property type="project" value="UniProtKB-UniRule"/>
</dbReference>
<dbReference type="FunFam" id="2.30.30.790:FF:000001">
    <property type="entry name" value="50S ribosomal protein L19"/>
    <property type="match status" value="1"/>
</dbReference>
<dbReference type="Gene3D" id="2.30.30.790">
    <property type="match status" value="1"/>
</dbReference>
<dbReference type="HAMAP" id="MF_00402">
    <property type="entry name" value="Ribosomal_bL19"/>
    <property type="match status" value="1"/>
</dbReference>
<dbReference type="InterPro" id="IPR001857">
    <property type="entry name" value="Ribosomal_bL19"/>
</dbReference>
<dbReference type="InterPro" id="IPR018257">
    <property type="entry name" value="Ribosomal_bL19_CS"/>
</dbReference>
<dbReference type="InterPro" id="IPR038657">
    <property type="entry name" value="Ribosomal_bL19_sf"/>
</dbReference>
<dbReference type="InterPro" id="IPR008991">
    <property type="entry name" value="Translation_prot_SH3-like_sf"/>
</dbReference>
<dbReference type="NCBIfam" id="TIGR01024">
    <property type="entry name" value="rplS_bact"/>
    <property type="match status" value="1"/>
</dbReference>
<dbReference type="PANTHER" id="PTHR15680:SF9">
    <property type="entry name" value="LARGE RIBOSOMAL SUBUNIT PROTEIN BL19M"/>
    <property type="match status" value="1"/>
</dbReference>
<dbReference type="PANTHER" id="PTHR15680">
    <property type="entry name" value="RIBOSOMAL PROTEIN L19"/>
    <property type="match status" value="1"/>
</dbReference>
<dbReference type="Pfam" id="PF01245">
    <property type="entry name" value="Ribosomal_L19"/>
    <property type="match status" value="1"/>
</dbReference>
<dbReference type="PIRSF" id="PIRSF002191">
    <property type="entry name" value="Ribosomal_L19"/>
    <property type="match status" value="1"/>
</dbReference>
<dbReference type="PRINTS" id="PR00061">
    <property type="entry name" value="RIBOSOMALL19"/>
</dbReference>
<dbReference type="SUPFAM" id="SSF50104">
    <property type="entry name" value="Translation proteins SH3-like domain"/>
    <property type="match status" value="1"/>
</dbReference>
<dbReference type="PROSITE" id="PS01015">
    <property type="entry name" value="RIBOSOMAL_L19"/>
    <property type="match status" value="1"/>
</dbReference>
<feature type="chain" id="PRO_1000049655" description="Large ribosomal subunit protein bL19">
    <location>
        <begin position="1"/>
        <end position="118"/>
    </location>
</feature>